<comment type="function">
    <text evidence="1">E2-like enzyme which forms an intermediate with UFM1 via a thioester linkage.</text>
</comment>
<comment type="similarity">
    <text evidence="2">Belongs to the ubiquitin-conjugating enzyme family. UFC1 subfamily.</text>
</comment>
<dbReference type="EMBL" id="GG666612">
    <property type="protein sequence ID" value="EEN48931.1"/>
    <property type="molecule type" value="Genomic_DNA"/>
</dbReference>
<dbReference type="RefSeq" id="XP_002592920.1">
    <property type="nucleotide sequence ID" value="XM_002592874.1"/>
</dbReference>
<dbReference type="SMR" id="C3ZDX5"/>
<dbReference type="STRING" id="7739.C3ZDX5"/>
<dbReference type="eggNOG" id="KOG3357">
    <property type="taxonomic scope" value="Eukaryota"/>
</dbReference>
<dbReference type="InParanoid" id="C3ZDX5"/>
<dbReference type="OMA" id="LWQKNVP"/>
<dbReference type="OrthoDB" id="10256182at2759"/>
<dbReference type="Proteomes" id="UP000001554">
    <property type="component" value="Unplaced"/>
</dbReference>
<dbReference type="GO" id="GO:0061657">
    <property type="term" value="F:UFM1 conjugating enzyme activity"/>
    <property type="evidence" value="ECO:0007669"/>
    <property type="project" value="InterPro"/>
</dbReference>
<dbReference type="GO" id="GO:0071568">
    <property type="term" value="F:UFM1 transferase activity"/>
    <property type="evidence" value="ECO:0000318"/>
    <property type="project" value="GO_Central"/>
</dbReference>
<dbReference type="GO" id="GO:0071569">
    <property type="term" value="P:protein ufmylation"/>
    <property type="evidence" value="ECO:0007669"/>
    <property type="project" value="InterPro"/>
</dbReference>
<dbReference type="GO" id="GO:0034976">
    <property type="term" value="P:response to endoplasmic reticulum stress"/>
    <property type="evidence" value="ECO:0000318"/>
    <property type="project" value="GO_Central"/>
</dbReference>
<dbReference type="GO" id="GO:0061709">
    <property type="term" value="P:reticulophagy"/>
    <property type="evidence" value="ECO:0000318"/>
    <property type="project" value="GO_Central"/>
</dbReference>
<dbReference type="CDD" id="cd11686">
    <property type="entry name" value="UBCc_UFC1"/>
    <property type="match status" value="1"/>
</dbReference>
<dbReference type="FunFam" id="3.10.110.10:FF:000042">
    <property type="entry name" value="Ubiquitin-fold modifier-conjugating enzyme 1"/>
    <property type="match status" value="1"/>
</dbReference>
<dbReference type="Gene3D" id="3.10.110.10">
    <property type="entry name" value="Ubiquitin Conjugating Enzyme"/>
    <property type="match status" value="1"/>
</dbReference>
<dbReference type="InterPro" id="IPR016135">
    <property type="entry name" value="UBQ-conjugating_enzyme/RWD"/>
</dbReference>
<dbReference type="InterPro" id="IPR014806">
    <property type="entry name" value="Ufc1"/>
</dbReference>
<dbReference type="PANTHER" id="PTHR12921">
    <property type="entry name" value="UBIQUITIN-FOLD MODIFIER-CONJUGATING ENZYME 1"/>
    <property type="match status" value="1"/>
</dbReference>
<dbReference type="PANTHER" id="PTHR12921:SF0">
    <property type="entry name" value="UBIQUITIN-FOLD MODIFIER-CONJUGATING ENZYME 1"/>
    <property type="match status" value="1"/>
</dbReference>
<dbReference type="Pfam" id="PF08694">
    <property type="entry name" value="UFC1"/>
    <property type="match status" value="1"/>
</dbReference>
<dbReference type="PIRSF" id="PIRSF008716">
    <property type="entry name" value="DUF1782"/>
    <property type="match status" value="1"/>
</dbReference>
<dbReference type="SUPFAM" id="SSF54495">
    <property type="entry name" value="UBC-like"/>
    <property type="match status" value="1"/>
</dbReference>
<gene>
    <name type="ORF">BRAFLDRAFT_275690</name>
</gene>
<keyword id="KW-1185">Reference proteome</keyword>
<keyword id="KW-0833">Ubl conjugation pathway</keyword>
<reference key="1">
    <citation type="journal article" date="2008" name="Nature">
        <title>The amphioxus genome and the evolution of the chordate karyotype.</title>
        <authorList>
            <person name="Putnam N.H."/>
            <person name="Butts T."/>
            <person name="Ferrier D.E.K."/>
            <person name="Furlong R.F."/>
            <person name="Hellsten U."/>
            <person name="Kawashima T."/>
            <person name="Robinson-Rechavi M."/>
            <person name="Shoguchi E."/>
            <person name="Terry A."/>
            <person name="Yu J.-K."/>
            <person name="Benito-Gutierrez E.L."/>
            <person name="Dubchak I."/>
            <person name="Garcia-Fernandez J."/>
            <person name="Gibson-Brown J.J."/>
            <person name="Grigoriev I.V."/>
            <person name="Horton A.C."/>
            <person name="de Jong P.J."/>
            <person name="Jurka J."/>
            <person name="Kapitonov V.V."/>
            <person name="Kohara Y."/>
            <person name="Kuroki Y."/>
            <person name="Lindquist E."/>
            <person name="Lucas S."/>
            <person name="Osoegawa K."/>
            <person name="Pennacchio L.A."/>
            <person name="Salamov A.A."/>
            <person name="Satou Y."/>
            <person name="Sauka-Spengler T."/>
            <person name="Schmutz J."/>
            <person name="Shin-I T."/>
            <person name="Toyoda A."/>
            <person name="Bronner-Fraser M."/>
            <person name="Fujiyama A."/>
            <person name="Holland L.Z."/>
            <person name="Holland P.W.H."/>
            <person name="Satoh N."/>
            <person name="Rokhsar D.S."/>
        </authorList>
    </citation>
    <scope>NUCLEOTIDE SEQUENCE [LARGE SCALE GENOMIC DNA]</scope>
    <source>
        <strain>S238N-H82</strain>
        <tissue>Testis</tissue>
    </source>
</reference>
<protein>
    <recommendedName>
        <fullName>Ubiquitin-fold modifier-conjugating enzyme 1</fullName>
    </recommendedName>
    <alternativeName>
        <fullName>Ufm1-conjugating enzyme 1</fullName>
    </alternativeName>
</protein>
<organism>
    <name type="scientific">Branchiostoma floridae</name>
    <name type="common">Florida lancelet</name>
    <name type="synonym">Amphioxus</name>
    <dbReference type="NCBI Taxonomy" id="7739"/>
    <lineage>
        <taxon>Eukaryota</taxon>
        <taxon>Metazoa</taxon>
        <taxon>Chordata</taxon>
        <taxon>Cephalochordata</taxon>
        <taxon>Leptocardii</taxon>
        <taxon>Amphioxiformes</taxon>
        <taxon>Branchiostomatidae</taxon>
        <taxon>Branchiostoma</taxon>
    </lineage>
</organism>
<accession>C3ZDX5</accession>
<sequence>MVDAATKKTLSNIPLLKTKAGPRDRDLWVQRLKEEYQALIQYVENNKKEDNDWFRLESNKEGTRWFGKCWHYQDLMKYEFEIEFDIPITFPTTAPEIAIPELEGKTAKMYRGGKICLTDHFKPLWGRNVPKFGIAHAMALGLGPWLAVEIPDLISKGLVQHKDDQQQQK</sequence>
<feature type="chain" id="PRO_0000391961" description="Ubiquitin-fold modifier-conjugating enzyme 1">
    <location>
        <begin position="1"/>
        <end position="169"/>
    </location>
</feature>
<feature type="active site" description="Glycyl thioester intermediate" evidence="1">
    <location>
        <position position="116"/>
    </location>
</feature>
<proteinExistence type="inferred from homology"/>
<name>UFC1_BRAFL</name>
<evidence type="ECO:0000250" key="1"/>
<evidence type="ECO:0000305" key="2"/>